<proteinExistence type="evidence at transcript level"/>
<feature type="chain" id="PRO_0000053920" description="Voltage-dependent P/Q-type calcium channel subunit alpha-1A">
    <location>
        <begin position="1" status="less than"/>
        <end position="171" status="greater than"/>
    </location>
</feature>
<feature type="transmembrane region" description="Helical; Name=S3 of repeat IV" evidence="3">
    <location>
        <begin position="1" status="less than"/>
        <end position="11"/>
    </location>
</feature>
<feature type="topological domain" description="Extracellular" evidence="3">
    <location>
        <begin position="12"/>
        <end position="18"/>
    </location>
</feature>
<feature type="transmembrane region" description="Helical; Name=S4 of repeat IV" evidence="3">
    <location>
        <begin position="19"/>
        <end position="37"/>
    </location>
</feature>
<feature type="topological domain" description="Cytoplasmic" evidence="3">
    <location>
        <begin position="38"/>
        <end position="56"/>
    </location>
</feature>
<feature type="transmembrane region" description="Helical; Name=S5 of repeat IV" evidence="3">
    <location>
        <begin position="57"/>
        <end position="76"/>
    </location>
</feature>
<feature type="topological domain" description="Extracellular" evidence="3">
    <location>
        <begin position="77"/>
        <end position="143"/>
    </location>
</feature>
<feature type="transmembrane region" description="Helical; Name=S6 of repeat IV" evidence="3">
    <location>
        <begin position="144"/>
        <end position="168"/>
    </location>
</feature>
<feature type="topological domain" description="Cytoplasmic" evidence="3">
    <location>
        <begin position="169"/>
        <end position="171" status="greater than"/>
    </location>
</feature>
<feature type="repeat" description="IV">
    <location>
        <begin position="1" status="less than"/>
        <end position="171" status="greater than"/>
    </location>
</feature>
<feature type="site" description="Calcium ion selectivity and permeability" evidence="1">
    <location>
        <position position="117"/>
    </location>
</feature>
<feature type="non-terminal residue">
    <location>
        <position position="1"/>
    </location>
</feature>
<feature type="non-terminal residue">
    <location>
        <position position="171"/>
    </location>
</feature>
<sequence length="171" mass="19657">FVTVLGSITDILVTEFGNNFINLSFLRLFRAARLIKLLRQGYTIRILLWTFVQSFKALPYVCLLIAMLFFIYAIIGMQVFGNIGIEEEDDESAITQHNNFRTFFQALMLLFRSATGEAWHEIMLSCLSGKPCDENSGIKEDECGNEFAYFYFVSFIFLCSFLMLNLFVAVI</sequence>
<organism>
    <name type="scientific">Gallus gallus</name>
    <name type="common">Chicken</name>
    <dbReference type="NCBI Taxonomy" id="9031"/>
    <lineage>
        <taxon>Eukaryota</taxon>
        <taxon>Metazoa</taxon>
        <taxon>Chordata</taxon>
        <taxon>Craniata</taxon>
        <taxon>Vertebrata</taxon>
        <taxon>Euteleostomi</taxon>
        <taxon>Archelosauria</taxon>
        <taxon>Archosauria</taxon>
        <taxon>Dinosauria</taxon>
        <taxon>Saurischia</taxon>
        <taxon>Theropoda</taxon>
        <taxon>Coelurosauria</taxon>
        <taxon>Aves</taxon>
        <taxon>Neognathae</taxon>
        <taxon>Galloanserae</taxon>
        <taxon>Galliformes</taxon>
        <taxon>Phasianidae</taxon>
        <taxon>Phasianinae</taxon>
        <taxon>Gallus</taxon>
    </lineage>
</organism>
<accession>O73705</accession>
<gene>
    <name type="primary">CACNA1A</name>
</gene>
<name>CAC1A_CHICK</name>
<keyword id="KW-0106">Calcium</keyword>
<keyword id="KW-0107">Calcium channel</keyword>
<keyword id="KW-0109">Calcium transport</keyword>
<keyword id="KW-1003">Cell membrane</keyword>
<keyword id="KW-1015">Disulfide bond</keyword>
<keyword id="KW-0407">Ion channel</keyword>
<keyword id="KW-0406">Ion transport</keyword>
<keyword id="KW-0472">Membrane</keyword>
<keyword id="KW-1185">Reference proteome</keyword>
<keyword id="KW-0677">Repeat</keyword>
<keyword id="KW-0812">Transmembrane</keyword>
<keyword id="KW-1133">Transmembrane helix</keyword>
<keyword id="KW-0813">Transport</keyword>
<keyword id="KW-0851">Voltage-gated channel</keyword>
<evidence type="ECO:0000250" key="1"/>
<evidence type="ECO:0000250" key="2">
    <source>
        <dbReference type="UniProtKB" id="O00555"/>
    </source>
</evidence>
<evidence type="ECO:0000255" key="3"/>
<evidence type="ECO:0000305" key="4"/>
<protein>
    <recommendedName>
        <fullName>Voltage-dependent P/Q-type calcium channel subunit alpha-1A</fullName>
    </recommendedName>
    <alternativeName>
        <fullName>CHCACHA1A</fullName>
    </alternativeName>
    <alternativeName>
        <fullName>Voltage-gated calcium channel subunit alpha Cav2.1</fullName>
    </alternativeName>
</protein>
<dbReference type="EMBL" id="AF027608">
    <property type="protein sequence ID" value="AAC08309.1"/>
    <property type="molecule type" value="mRNA"/>
</dbReference>
<dbReference type="SMR" id="O73705"/>
<dbReference type="VEuPathDB" id="HostDB:geneid_374169"/>
<dbReference type="InParanoid" id="O73705"/>
<dbReference type="PhylomeDB" id="O73705"/>
<dbReference type="Proteomes" id="UP000000539">
    <property type="component" value="Unassembled WGS sequence"/>
</dbReference>
<dbReference type="GO" id="GO:0005886">
    <property type="term" value="C:plasma membrane"/>
    <property type="evidence" value="ECO:0000250"/>
    <property type="project" value="UniProtKB"/>
</dbReference>
<dbReference type="GO" id="GO:0005891">
    <property type="term" value="C:voltage-gated calcium channel complex"/>
    <property type="evidence" value="ECO:0007669"/>
    <property type="project" value="InterPro"/>
</dbReference>
<dbReference type="GO" id="GO:0008331">
    <property type="term" value="F:high voltage-gated calcium channel activity"/>
    <property type="evidence" value="ECO:0000250"/>
    <property type="project" value="UniProtKB"/>
</dbReference>
<dbReference type="GO" id="GO:0070588">
    <property type="term" value="P:calcium ion transmembrane transport"/>
    <property type="evidence" value="ECO:0000250"/>
    <property type="project" value="UniProtKB"/>
</dbReference>
<dbReference type="FunFam" id="1.10.287.70:FF:000023">
    <property type="entry name" value="Voltage-dependent R-type calcium channel subunit alpha"/>
    <property type="match status" value="1"/>
</dbReference>
<dbReference type="Gene3D" id="1.10.287.70">
    <property type="match status" value="1"/>
</dbReference>
<dbReference type="Gene3D" id="1.20.120.350">
    <property type="entry name" value="Voltage-gated potassium channels. Chain C"/>
    <property type="match status" value="1"/>
</dbReference>
<dbReference type="InterPro" id="IPR005821">
    <property type="entry name" value="Ion_trans_dom"/>
</dbReference>
<dbReference type="InterPro" id="IPR050599">
    <property type="entry name" value="VDCC_alpha-1_subunit"/>
</dbReference>
<dbReference type="InterPro" id="IPR002077">
    <property type="entry name" value="VDCCAlpha1"/>
</dbReference>
<dbReference type="InterPro" id="IPR027359">
    <property type="entry name" value="Volt_channel_dom_sf"/>
</dbReference>
<dbReference type="PANTHER" id="PTHR45628">
    <property type="entry name" value="VOLTAGE-DEPENDENT CALCIUM CHANNEL TYPE A SUBUNIT ALPHA-1"/>
    <property type="match status" value="1"/>
</dbReference>
<dbReference type="PANTHER" id="PTHR45628:SF3">
    <property type="entry name" value="VOLTAGE-DEPENDENT P_Q-TYPE CALCIUM CHANNEL SUBUNIT ALPHA-1A"/>
    <property type="match status" value="1"/>
</dbReference>
<dbReference type="Pfam" id="PF00520">
    <property type="entry name" value="Ion_trans"/>
    <property type="match status" value="1"/>
</dbReference>
<dbReference type="PRINTS" id="PR00167">
    <property type="entry name" value="CACHANNEL"/>
</dbReference>
<dbReference type="SUPFAM" id="SSF81324">
    <property type="entry name" value="Voltage-gated potassium channels"/>
    <property type="match status" value="1"/>
</dbReference>
<comment type="function">
    <text evidence="2">The isoform alpha-1A gives rise to P and/or Q-type calcium currents. P/Q-type calcium channels belong to the 'high-voltage activated' (HVA) group.</text>
</comment>
<comment type="catalytic activity">
    <reaction evidence="2">
        <text>Ca(2+)(in) = Ca(2+)(out)</text>
        <dbReference type="Rhea" id="RHEA:29671"/>
        <dbReference type="ChEBI" id="CHEBI:29108"/>
    </reaction>
</comment>
<comment type="subunit">
    <text evidence="2">Voltage-dependent calcium channels are multisubunit complexes, consisting of alpha-1, alpha-2, beta and delta subunits in a 1:1:1:1 ratio. The channel activity is directed by the pore-forming and voltage-sensitive alpha-1 subunit. In many cases, this subunit is sufficient to generate voltage-sensitive calcium channel activity. The auxiliary subunits beta and alpha-2/delta linked by a disulfide bridge regulate the channel activity.</text>
</comment>
<comment type="subcellular location">
    <subcellularLocation>
        <location evidence="2">Cell membrane</location>
        <topology evidence="3">Multi-pass membrane protein</topology>
    </subcellularLocation>
</comment>
<comment type="domain">
    <text>Each of the four internal repeats contains five hydrophobic transmembrane segments (S1, S2, S3, S5, S6) and one positively charged transmembrane segment (S4). S4 segments probably represent the voltage-sensor and are characterized by a series of positively charged amino acids at every third position.</text>
</comment>
<comment type="similarity">
    <text evidence="4">Belongs to the calcium channel alpha-1 subunit (TC 1.A.1.11) family. CACNA1A subfamily.</text>
</comment>
<reference key="1">
    <citation type="journal article" date="1997" name="Proc. Natl. Acad. Sci. U.S.A.">
        <title>Predominance of the alpha1D subunit in L-type voltage-gated Ca2+ channels of hair cells in the chicken's cochlea.</title>
        <authorList>
            <person name="Kollmar R."/>
            <person name="Montgomery L.G."/>
            <person name="Fak J."/>
            <person name="Henry L.J."/>
            <person name="Hudspeth A.J."/>
        </authorList>
    </citation>
    <scope>NUCLEOTIDE SEQUENCE [MRNA]</scope>
    <source>
        <strain>White leghorn</strain>
        <tissue>Brain</tissue>
    </source>
</reference>